<evidence type="ECO:0000250" key="1">
    <source>
        <dbReference type="UniProtKB" id="Q92609"/>
    </source>
</evidence>
<evidence type="ECO:0000250" key="2">
    <source>
        <dbReference type="UniProtKB" id="Q96BZ9"/>
    </source>
</evidence>
<evidence type="ECO:0000255" key="3">
    <source>
        <dbReference type="PROSITE-ProRule" id="PRU00163"/>
    </source>
</evidence>
<evidence type="ECO:0000256" key="4">
    <source>
        <dbReference type="SAM" id="MobiDB-lite"/>
    </source>
</evidence>
<evidence type="ECO:0000305" key="5"/>
<evidence type="ECO:0007744" key="6">
    <source>
    </source>
</evidence>
<evidence type="ECO:0007744" key="7">
    <source>
    </source>
</evidence>
<evidence type="ECO:0007744" key="8">
    <source>
    </source>
</evidence>
<evidence type="ECO:0007744" key="9">
    <source>
    </source>
</evidence>
<comment type="function">
    <text evidence="1">May act as a GTPase-activating protein for Rab family protein(s). May act as a GAP for RAB7A. Can displace RAB7A and retromer CSC subcomplex from the endosomal membrane to the cytosol; at least retromer displacement seems to require its catalytic activity. Required for retrograde transport of cargo proteins from endosomes to the trans-Golgi network (TGN); the function seems to require its catalytic activity. Involved in regulation of autophagy. May act as a molecular switch between endosomal and autophagosomal transport and is involved in reprogramming vesicle trafficking upon autophagy induction. Involved in the trafficking of ATG9A upon activation of autophagy. May regulate the recruitment of ATG9A-AP2-containing vesicles to autophagic membranes (By similarity).</text>
</comment>
<comment type="subunit">
    <text evidence="1">Interacts with MAP1LC3A, MAP1LC3B, MAP1LC3C, GABARAP, GABARAPL1, GABARAPL2. Interacts with VPS29 and VPS35; indicative for an association with retromer CSC subcomplex. MAP1LC3A and VPS29 compete for binding to TBC1D5. Interacts with AP2M1; indicative for an association with the AP2 complex. Interacts with ULK1 and ATG13 (phosphorylated); indicative for an association with the activated ULK1-ATG13-FIP200 complex. Interacts with ATG9A; the interactions seems to be restricted to the AP2-clathrin-associated fraction of ATG9A.</text>
</comment>
<comment type="subcellular location">
    <subcellularLocation>
        <location evidence="1">Endosome membrane</location>
    </subcellularLocation>
    <subcellularLocation>
        <location evidence="1">Cytoplasmic vesicle</location>
        <location evidence="1">Autophagosome</location>
    </subcellularLocation>
    <text evidence="1">During starvation induced autophagy is relocalized from endosomal localization to LC3-positive autophagosomes (By similarity).</text>
</comment>
<comment type="domain">
    <text evidence="2">The arginine and glutamine fingers are critical for the GTPase-activating mechanism, they pull out Rab's 'switch 2' glutamine and insert in Rab's active site.</text>
</comment>
<comment type="domain">
    <text evidence="1">The LIR (LC3-interacting region) motif mediates the interaction with ATG8 family proteins. LIR 1 is also implicated in interaction with retromer; LIR 2 is only implicated in interaction with ATG8 family proteins.</text>
</comment>
<sequence>MYKSVSETRHPLQSEEQEVGIDPLFSYSNKTRGDLSQNGRGSNSTLDTEGTFNSYMKEWEELFVNNNYLATVRQKGINGQLRSSRFRSICWKLFLCVLPQDKSQWISKIKELRAWYSSIKEIHITNPRKAAGQQDLMINNPLSQDEGSLWNKFFQDKELRSMIEQDVKRTFPEMQFFQQENVRKILTDVLFCYARENEQLLYKQGMHELLAPIIFTLHCDHQAFLHASESAQPSEEMKTLLNPEYLEHDAYAMFSQLMETAEPWFSTFEHDGQKGKETLMAPIPFARPQDLGPTVAIVTKVNQIQDHLLKKHDIELYMHLNRLEIAPQIYGLRWVRLLFGREFPLQDLLVVWDALFADSLNLSLVDYVFTAMLLYIRDALISSNYQTCLGLLMHYPIIGDIHSLILKALFLRDPKRNPRPATYQFHPNLDYYKARGADLMNKSRTNARGAPLNIHKVSNSLINFGRKLISPASAPGSMGGPVPGNNSSSSFSAAIPTRTSTEAPRHHLLQQQQQQQHQQQQQQQPQQQQQQHQQQQQQQRLMKSESMPVQLNKGQSSKTISSSPSIESLPGGREFTGSPPPSATKKDSFFSNIARSRSHSKTMGRKESEEELEAQISFLQGQLNDLDAMCKYCAKVMDMHLVNIQDVVLQENLEKEDQILVSLAGLKQIKDILKGSLRFNQSQLEAGENEQITIADDHYCSSGQDQGSQVPRAAKQASSEMPGCTGGTTPDDFILVSKEDEGHRARGAFSGQAQPLLTLRSTSGKSRAPACSPLLFSDPLMGPASASASSSNPSSSPDDDSSKESGFTIVSPLDI</sequence>
<dbReference type="EMBL" id="AC099694">
    <property type="status" value="NOT_ANNOTATED_CDS"/>
    <property type="molecule type" value="Genomic_DNA"/>
</dbReference>
<dbReference type="EMBL" id="AC110168">
    <property type="status" value="NOT_ANNOTATED_CDS"/>
    <property type="molecule type" value="Genomic_DNA"/>
</dbReference>
<dbReference type="EMBL" id="AC125140">
    <property type="status" value="NOT_ANNOTATED_CDS"/>
    <property type="molecule type" value="Genomic_DNA"/>
</dbReference>
<dbReference type="EMBL" id="AC154214">
    <property type="status" value="NOT_ANNOTATED_CDS"/>
    <property type="molecule type" value="Genomic_DNA"/>
</dbReference>
<dbReference type="EMBL" id="CT025541">
    <property type="status" value="NOT_ANNOTATED_CDS"/>
    <property type="molecule type" value="Genomic_DNA"/>
</dbReference>
<dbReference type="EMBL" id="BC043113">
    <property type="protein sequence ID" value="AAH43113.1"/>
    <property type="molecule type" value="mRNA"/>
</dbReference>
<dbReference type="CCDS" id="CCDS37650.1"/>
<dbReference type="RefSeq" id="NP_001272922.1">
    <property type="nucleotide sequence ID" value="NM_001285993.1"/>
</dbReference>
<dbReference type="RefSeq" id="NP_082438.3">
    <property type="nucleotide sequence ID" value="NM_028162.4"/>
</dbReference>
<dbReference type="SMR" id="Q80XQ2"/>
<dbReference type="BioGRID" id="215243">
    <property type="interactions" value="17"/>
</dbReference>
<dbReference type="FunCoup" id="Q80XQ2">
    <property type="interactions" value="4133"/>
</dbReference>
<dbReference type="IntAct" id="Q80XQ2">
    <property type="interactions" value="1"/>
</dbReference>
<dbReference type="STRING" id="10090.ENSMUSP00000024717"/>
<dbReference type="GlyGen" id="Q80XQ2">
    <property type="glycosylation" value="4 sites, 1 N-linked glycan (1 site), 1 O-linked glycan (2 sites)"/>
</dbReference>
<dbReference type="iPTMnet" id="Q80XQ2"/>
<dbReference type="PhosphoSitePlus" id="Q80XQ2"/>
<dbReference type="jPOST" id="Q80XQ2"/>
<dbReference type="PaxDb" id="10090-ENSMUSP00000024717"/>
<dbReference type="ProteomicsDB" id="262947"/>
<dbReference type="Pumba" id="Q80XQ2"/>
<dbReference type="Antibodypedia" id="45185">
    <property type="antibodies" value="52 antibodies from 19 providers"/>
</dbReference>
<dbReference type="DNASU" id="72238"/>
<dbReference type="Ensembl" id="ENSMUST00000024717.10">
    <property type="protein sequence ID" value="ENSMUSP00000024717.9"/>
    <property type="gene ID" value="ENSMUSG00000023923.11"/>
</dbReference>
<dbReference type="GeneID" id="72238"/>
<dbReference type="KEGG" id="mmu:72238"/>
<dbReference type="UCSC" id="uc008cyy.3">
    <property type="organism name" value="mouse"/>
</dbReference>
<dbReference type="AGR" id="MGI:1919488"/>
<dbReference type="CTD" id="9779"/>
<dbReference type="MGI" id="MGI:1919488">
    <property type="gene designation" value="Tbc1d5"/>
</dbReference>
<dbReference type="VEuPathDB" id="HostDB:ENSMUSG00000023923"/>
<dbReference type="eggNOG" id="KOG1091">
    <property type="taxonomic scope" value="Eukaryota"/>
</dbReference>
<dbReference type="GeneTree" id="ENSGT00940000157121"/>
<dbReference type="HOGENOM" id="CLU_020460_1_0_1"/>
<dbReference type="InParanoid" id="Q80XQ2"/>
<dbReference type="OMA" id="PWNQYFQ"/>
<dbReference type="OrthoDB" id="27140at2759"/>
<dbReference type="PhylomeDB" id="Q80XQ2"/>
<dbReference type="TreeFam" id="TF105784"/>
<dbReference type="BioGRID-ORCS" id="72238">
    <property type="hits" value="10 hits in 81 CRISPR screens"/>
</dbReference>
<dbReference type="ChiTaRS" id="Tbc1d5">
    <property type="organism name" value="mouse"/>
</dbReference>
<dbReference type="PRO" id="PR:Q80XQ2"/>
<dbReference type="Proteomes" id="UP000000589">
    <property type="component" value="Chromosome 17"/>
</dbReference>
<dbReference type="RNAct" id="Q80XQ2">
    <property type="molecule type" value="protein"/>
</dbReference>
<dbReference type="Bgee" id="ENSMUSG00000023923">
    <property type="expression patterns" value="Expressed in embryonic post-anal tail and 219 other cell types or tissues"/>
</dbReference>
<dbReference type="ExpressionAtlas" id="Q80XQ2">
    <property type="expression patterns" value="baseline and differential"/>
</dbReference>
<dbReference type="GO" id="GO:0005776">
    <property type="term" value="C:autophagosome"/>
    <property type="evidence" value="ECO:0007669"/>
    <property type="project" value="UniProtKB-SubCell"/>
</dbReference>
<dbReference type="GO" id="GO:0010008">
    <property type="term" value="C:endosome membrane"/>
    <property type="evidence" value="ECO:0007669"/>
    <property type="project" value="UniProtKB-SubCell"/>
</dbReference>
<dbReference type="GO" id="GO:0030904">
    <property type="term" value="C:retromer complex"/>
    <property type="evidence" value="ECO:0000266"/>
    <property type="project" value="MGI"/>
</dbReference>
<dbReference type="GO" id="GO:0005096">
    <property type="term" value="F:GTPase activator activity"/>
    <property type="evidence" value="ECO:0007669"/>
    <property type="project" value="UniProtKB-KW"/>
</dbReference>
<dbReference type="GO" id="GO:0006914">
    <property type="term" value="P:autophagy"/>
    <property type="evidence" value="ECO:0007669"/>
    <property type="project" value="UniProtKB-KW"/>
</dbReference>
<dbReference type="GO" id="GO:0015031">
    <property type="term" value="P:protein transport"/>
    <property type="evidence" value="ECO:0007669"/>
    <property type="project" value="UniProtKB-KW"/>
</dbReference>
<dbReference type="FunFam" id="1.10.472.80:FF:000010">
    <property type="entry name" value="Putative TBC1 domain family member 5"/>
    <property type="match status" value="1"/>
</dbReference>
<dbReference type="FunFam" id="1.10.8.270:FF:000011">
    <property type="entry name" value="TBC1 domain family member 5"/>
    <property type="match status" value="1"/>
</dbReference>
<dbReference type="Gene3D" id="1.10.8.270">
    <property type="entry name" value="putative rabgap domain of human tbc1 domain family member 14 like domains"/>
    <property type="match status" value="1"/>
</dbReference>
<dbReference type="Gene3D" id="1.10.472.80">
    <property type="entry name" value="Ypt/Rab-GAP domain of gyp1p, domain 3"/>
    <property type="match status" value="1"/>
</dbReference>
<dbReference type="InterPro" id="IPR000195">
    <property type="entry name" value="Rab-GAP-TBC_dom"/>
</dbReference>
<dbReference type="InterPro" id="IPR035969">
    <property type="entry name" value="Rab-GAP_TBC_sf"/>
</dbReference>
<dbReference type="PANTHER" id="PTHR22957:SF337">
    <property type="entry name" value="TBC1 DOMAIN FAMILY MEMBER 5"/>
    <property type="match status" value="1"/>
</dbReference>
<dbReference type="PANTHER" id="PTHR22957">
    <property type="entry name" value="TBC1 DOMAIN FAMILY MEMBER GTPASE-ACTIVATING PROTEIN"/>
    <property type="match status" value="1"/>
</dbReference>
<dbReference type="Pfam" id="PF00566">
    <property type="entry name" value="RabGAP-TBC"/>
    <property type="match status" value="2"/>
</dbReference>
<dbReference type="SMART" id="SM00164">
    <property type="entry name" value="TBC"/>
    <property type="match status" value="1"/>
</dbReference>
<dbReference type="SUPFAM" id="SSF81995">
    <property type="entry name" value="beta-sandwich domain of Sec23/24"/>
    <property type="match status" value="1"/>
</dbReference>
<dbReference type="SUPFAM" id="SSF47923">
    <property type="entry name" value="Ypt/Rab-GAP domain of gyp1p"/>
    <property type="match status" value="2"/>
</dbReference>
<dbReference type="PROSITE" id="PS50086">
    <property type="entry name" value="TBC_RABGAP"/>
    <property type="match status" value="1"/>
</dbReference>
<name>TBCD5_MOUSE</name>
<feature type="chain" id="PRO_0000208029" description="TBC1 domain family member 5">
    <location>
        <begin position="1"/>
        <end position="815"/>
    </location>
</feature>
<feature type="domain" description="Rab-GAP TBC" evidence="3">
    <location>
        <begin position="81"/>
        <end position="359"/>
    </location>
</feature>
<feature type="region of interest" description="Required for interaction with retromer; involved in interaction with ATG8 family proteins" evidence="1">
    <location>
        <begin position="56"/>
        <end position="64"/>
    </location>
</feature>
<feature type="region of interest" description="Disordered" evidence="4">
    <location>
        <begin position="475"/>
        <end position="591"/>
    </location>
</feature>
<feature type="region of interest" description="Disordered" evidence="4">
    <location>
        <begin position="702"/>
        <end position="733"/>
    </location>
</feature>
<feature type="region of interest" description="Disordered" evidence="4">
    <location>
        <begin position="754"/>
        <end position="815"/>
    </location>
</feature>
<feature type="region of interest" description="Required for interaction with ATG8 family proteins" evidence="1">
    <location>
        <begin position="806"/>
        <end position="811"/>
    </location>
</feature>
<feature type="short sequence motif" description="LIR 1" evidence="1">
    <location>
        <begin position="57"/>
        <end position="62"/>
    </location>
</feature>
<feature type="short sequence motif" description="LIR 2" evidence="1">
    <location>
        <begin position="805"/>
        <end position="809"/>
    </location>
</feature>
<feature type="compositionally biased region" description="Low complexity" evidence="4">
    <location>
        <begin position="483"/>
        <end position="492"/>
    </location>
</feature>
<feature type="compositionally biased region" description="Low complexity" evidence="4">
    <location>
        <begin position="510"/>
        <end position="539"/>
    </location>
</feature>
<feature type="compositionally biased region" description="Low complexity" evidence="4">
    <location>
        <begin position="556"/>
        <end position="568"/>
    </location>
</feature>
<feature type="compositionally biased region" description="Polar residues" evidence="4">
    <location>
        <begin position="754"/>
        <end position="765"/>
    </location>
</feature>
<feature type="compositionally biased region" description="Low complexity" evidence="4">
    <location>
        <begin position="783"/>
        <end position="796"/>
    </location>
</feature>
<feature type="site" description="Arginine finger" evidence="2">
    <location>
        <position position="169"/>
    </location>
</feature>
<feature type="site" description="Glutamine finger" evidence="2">
    <location>
        <position position="204"/>
    </location>
</feature>
<feature type="modified residue" description="Phosphoserine" evidence="1">
    <location>
        <position position="44"/>
    </location>
</feature>
<feature type="modified residue" description="Asymmetric dimethylarginine; alternate" evidence="9">
    <location>
        <position position="448"/>
    </location>
</feature>
<feature type="modified residue" description="Omega-N-methylarginine; alternate" evidence="9">
    <location>
        <position position="448"/>
    </location>
</feature>
<feature type="modified residue" description="Phosphoserine" evidence="1">
    <location>
        <position position="460"/>
    </location>
</feature>
<feature type="modified residue" description="Phosphoserine" evidence="1">
    <location>
        <position position="546"/>
    </location>
</feature>
<feature type="modified residue" description="Phosphoserine" evidence="1">
    <location>
        <position position="563"/>
    </location>
</feature>
<feature type="modified residue" description="Phosphoserine" evidence="6 8">
    <location>
        <position position="565"/>
    </location>
</feature>
<feature type="modified residue" description="Phosphoserine" evidence="6 8">
    <location>
        <position position="568"/>
    </location>
</feature>
<feature type="modified residue" description="Phosphoserine" evidence="7">
    <location>
        <position position="578"/>
    </location>
</feature>
<feature type="modified residue" description="Phosphoserine" evidence="8">
    <location>
        <position position="608"/>
    </location>
</feature>
<feature type="modified residue" description="Phosphoserine" evidence="1">
    <location>
        <position position="811"/>
    </location>
</feature>
<feature type="sequence conflict" description="In Ref. 2; AAH43113." evidence="5" ref="2">
    <original>A</original>
    <variation>S</variation>
    <location>
        <position position="770"/>
    </location>
</feature>
<organism>
    <name type="scientific">Mus musculus</name>
    <name type="common">Mouse</name>
    <dbReference type="NCBI Taxonomy" id="10090"/>
    <lineage>
        <taxon>Eukaryota</taxon>
        <taxon>Metazoa</taxon>
        <taxon>Chordata</taxon>
        <taxon>Craniata</taxon>
        <taxon>Vertebrata</taxon>
        <taxon>Euteleostomi</taxon>
        <taxon>Mammalia</taxon>
        <taxon>Eutheria</taxon>
        <taxon>Euarchontoglires</taxon>
        <taxon>Glires</taxon>
        <taxon>Rodentia</taxon>
        <taxon>Myomorpha</taxon>
        <taxon>Muroidea</taxon>
        <taxon>Muridae</taxon>
        <taxon>Murinae</taxon>
        <taxon>Mus</taxon>
        <taxon>Mus</taxon>
    </lineage>
</organism>
<keyword id="KW-0072">Autophagy</keyword>
<keyword id="KW-0968">Cytoplasmic vesicle</keyword>
<keyword id="KW-0967">Endosome</keyword>
<keyword id="KW-0343">GTPase activation</keyword>
<keyword id="KW-0472">Membrane</keyword>
<keyword id="KW-0488">Methylation</keyword>
<keyword id="KW-0597">Phosphoprotein</keyword>
<keyword id="KW-0653">Protein transport</keyword>
<keyword id="KW-1185">Reference proteome</keyword>
<keyword id="KW-0813">Transport</keyword>
<gene>
    <name type="primary">Tbc1d5</name>
</gene>
<accession>Q80XQ2</accession>
<accession>E9PZJ9</accession>
<reference key="1">
    <citation type="journal article" date="2009" name="PLoS Biol.">
        <title>Lineage-specific biology revealed by a finished genome assembly of the mouse.</title>
        <authorList>
            <person name="Church D.M."/>
            <person name="Goodstadt L."/>
            <person name="Hillier L.W."/>
            <person name="Zody M.C."/>
            <person name="Goldstein S."/>
            <person name="She X."/>
            <person name="Bult C.J."/>
            <person name="Agarwala R."/>
            <person name="Cherry J.L."/>
            <person name="DiCuccio M."/>
            <person name="Hlavina W."/>
            <person name="Kapustin Y."/>
            <person name="Meric P."/>
            <person name="Maglott D."/>
            <person name="Birtle Z."/>
            <person name="Marques A.C."/>
            <person name="Graves T."/>
            <person name="Zhou S."/>
            <person name="Teague B."/>
            <person name="Potamousis K."/>
            <person name="Churas C."/>
            <person name="Place M."/>
            <person name="Herschleb J."/>
            <person name="Runnheim R."/>
            <person name="Forrest D."/>
            <person name="Amos-Landgraf J."/>
            <person name="Schwartz D.C."/>
            <person name="Cheng Z."/>
            <person name="Lindblad-Toh K."/>
            <person name="Eichler E.E."/>
            <person name="Ponting C.P."/>
        </authorList>
    </citation>
    <scope>NUCLEOTIDE SEQUENCE [LARGE SCALE GENOMIC DNA]</scope>
    <source>
        <strain>C57BL/6J</strain>
    </source>
</reference>
<reference key="2">
    <citation type="journal article" date="2004" name="Genome Res.">
        <title>The status, quality, and expansion of the NIH full-length cDNA project: the Mammalian Gene Collection (MGC).</title>
        <authorList>
            <consortium name="The MGC Project Team"/>
        </authorList>
    </citation>
    <scope>NUCLEOTIDE SEQUENCE [LARGE SCALE MRNA]</scope>
    <source>
        <strain>C57BL/6J</strain>
        <tissue>Brain</tissue>
    </source>
</reference>
<reference key="3">
    <citation type="journal article" date="2007" name="Proc. Natl. Acad. Sci. U.S.A.">
        <title>Large-scale phosphorylation analysis of mouse liver.</title>
        <authorList>
            <person name="Villen J."/>
            <person name="Beausoleil S.A."/>
            <person name="Gerber S.A."/>
            <person name="Gygi S.P."/>
        </authorList>
    </citation>
    <scope>PHOSPHORYLATION [LARGE SCALE ANALYSIS] AT SER-565 AND SER-568</scope>
    <scope>IDENTIFICATION BY MASS SPECTROMETRY [LARGE SCALE ANALYSIS]</scope>
    <source>
        <tissue>Liver</tissue>
    </source>
</reference>
<reference key="4">
    <citation type="journal article" date="2009" name="Immunity">
        <title>The phagosomal proteome in interferon-gamma-activated macrophages.</title>
        <authorList>
            <person name="Trost M."/>
            <person name="English L."/>
            <person name="Lemieux S."/>
            <person name="Courcelles M."/>
            <person name="Desjardins M."/>
            <person name="Thibault P."/>
        </authorList>
    </citation>
    <scope>PHOSPHORYLATION [LARGE SCALE ANALYSIS] AT SER-578</scope>
    <scope>IDENTIFICATION BY MASS SPECTROMETRY [LARGE SCALE ANALYSIS]</scope>
</reference>
<reference key="5">
    <citation type="journal article" date="2010" name="Cell">
        <title>A tissue-specific atlas of mouse protein phosphorylation and expression.</title>
        <authorList>
            <person name="Huttlin E.L."/>
            <person name="Jedrychowski M.P."/>
            <person name="Elias J.E."/>
            <person name="Goswami T."/>
            <person name="Rad R."/>
            <person name="Beausoleil S.A."/>
            <person name="Villen J."/>
            <person name="Haas W."/>
            <person name="Sowa M.E."/>
            <person name="Gygi S.P."/>
        </authorList>
    </citation>
    <scope>PHOSPHORYLATION [LARGE SCALE ANALYSIS] AT SER-565; SER-568 AND SER-608</scope>
    <scope>IDENTIFICATION BY MASS SPECTROMETRY [LARGE SCALE ANALYSIS]</scope>
    <source>
        <tissue>Brain</tissue>
        <tissue>Brown adipose tissue</tissue>
        <tissue>Heart</tissue>
        <tissue>Kidney</tissue>
        <tissue>Lung</tissue>
        <tissue>Spleen</tissue>
        <tissue>Testis</tissue>
    </source>
</reference>
<reference key="6">
    <citation type="journal article" date="2014" name="Mol. Cell. Proteomics">
        <title>Immunoaffinity enrichment and mass spectrometry analysis of protein methylation.</title>
        <authorList>
            <person name="Guo A."/>
            <person name="Gu H."/>
            <person name="Zhou J."/>
            <person name="Mulhern D."/>
            <person name="Wang Y."/>
            <person name="Lee K.A."/>
            <person name="Yang V."/>
            <person name="Aguiar M."/>
            <person name="Kornhauser J."/>
            <person name="Jia X."/>
            <person name="Ren J."/>
            <person name="Beausoleil S.A."/>
            <person name="Silva J.C."/>
            <person name="Vemulapalli V."/>
            <person name="Bedford M.T."/>
            <person name="Comb M.J."/>
        </authorList>
    </citation>
    <scope>METHYLATION [LARGE SCALE ANALYSIS] AT ARG-448</scope>
    <scope>IDENTIFICATION BY MASS SPECTROMETRY [LARGE SCALE ANALYSIS]</scope>
    <source>
        <tissue>Brain</tissue>
        <tissue>Embryo</tissue>
    </source>
</reference>
<protein>
    <recommendedName>
        <fullName>TBC1 domain family member 5</fullName>
    </recommendedName>
</protein>
<proteinExistence type="evidence at protein level"/>